<protein>
    <recommendedName>
        <fullName evidence="1">Sulfate adenylyltransferase subunit 2</fullName>
        <ecNumber evidence="1">2.7.7.4</ecNumber>
    </recommendedName>
    <alternativeName>
        <fullName evidence="1">ATP-sulfurylase small subunit</fullName>
    </alternativeName>
    <alternativeName>
        <fullName evidence="1">Sulfate adenylate transferase</fullName>
        <shortName evidence="1">SAT</shortName>
    </alternativeName>
</protein>
<proteinExistence type="inferred from homology"/>
<keyword id="KW-0067">ATP-binding</keyword>
<keyword id="KW-0547">Nucleotide-binding</keyword>
<keyword id="KW-0548">Nucleotidyltransferase</keyword>
<keyword id="KW-0808">Transferase</keyword>
<accession>Q5PEH1</accession>
<comment type="function">
    <text evidence="1">With CysN forms the ATP sulfurylase (ATPS) that catalyzes the adenylation of sulfate producing adenosine 5'-phosphosulfate (APS) and diphosphate, the first enzymatic step in sulfur assimilation pathway. APS synthesis involves the formation of a high-energy phosphoric-sulfuric acid anhydride bond driven by GTP hydrolysis by CysN coupled to ATP hydrolysis by CysD.</text>
</comment>
<comment type="catalytic activity">
    <reaction evidence="1">
        <text>sulfate + ATP + H(+) = adenosine 5'-phosphosulfate + diphosphate</text>
        <dbReference type="Rhea" id="RHEA:18133"/>
        <dbReference type="ChEBI" id="CHEBI:15378"/>
        <dbReference type="ChEBI" id="CHEBI:16189"/>
        <dbReference type="ChEBI" id="CHEBI:30616"/>
        <dbReference type="ChEBI" id="CHEBI:33019"/>
        <dbReference type="ChEBI" id="CHEBI:58243"/>
        <dbReference type="EC" id="2.7.7.4"/>
    </reaction>
</comment>
<comment type="pathway">
    <text evidence="1">Sulfur metabolism; hydrogen sulfide biosynthesis; sulfite from sulfate: step 1/3.</text>
</comment>
<comment type="subunit">
    <text evidence="1">Heterodimer composed of CysD, the smaller subunit, and CysN.</text>
</comment>
<comment type="similarity">
    <text evidence="1">Belongs to the PAPS reductase family. CysD subfamily.</text>
</comment>
<name>CYSD_SALPA</name>
<sequence length="302" mass="35206">MDQKRLTHLRQLETESIHIIREVAAEFANPVMLYSIGKDSSVMLHLARKAFYPGTLPFPLLHVDTGWKFREMYAFRDRTANAYGCELLVHKNPEGVAMGINPFVHGSAKHTDIMKTEGLKQALNKYGFDAAFGGARRDEEKSRAKERIYSFRDRFHRWDPKNQRPELWRNYNGQINKGESIRVFPLSNWTEQDIWQYIWLENIDIVPLYLAAERPVLERDGMLMMVDDDRIDLQPGEVIKKRMVRFRTLGCWPLTGAVESHAQTLPEIIEEMLVSTTSERQGRMIDRDQAGSMELKKRQGYF</sequence>
<reference key="1">
    <citation type="journal article" date="2004" name="Nat. Genet.">
        <title>Comparison of genome degradation in Paratyphi A and Typhi, human-restricted serovars of Salmonella enterica that cause typhoid.</title>
        <authorList>
            <person name="McClelland M."/>
            <person name="Sanderson K.E."/>
            <person name="Clifton S.W."/>
            <person name="Latreille P."/>
            <person name="Porwollik S."/>
            <person name="Sabo A."/>
            <person name="Meyer R."/>
            <person name="Bieri T."/>
            <person name="Ozersky P."/>
            <person name="McLellan M."/>
            <person name="Harkins C.R."/>
            <person name="Wang C."/>
            <person name="Nguyen C."/>
            <person name="Berghoff A."/>
            <person name="Elliott G."/>
            <person name="Kohlberg S."/>
            <person name="Strong C."/>
            <person name="Du F."/>
            <person name="Carter J."/>
            <person name="Kremizki C."/>
            <person name="Layman D."/>
            <person name="Leonard S."/>
            <person name="Sun H."/>
            <person name="Fulton L."/>
            <person name="Nash W."/>
            <person name="Miner T."/>
            <person name="Minx P."/>
            <person name="Delehaunty K."/>
            <person name="Fronick C."/>
            <person name="Magrini V."/>
            <person name="Nhan M."/>
            <person name="Warren W."/>
            <person name="Florea L."/>
            <person name="Spieth J."/>
            <person name="Wilson R.K."/>
        </authorList>
    </citation>
    <scope>NUCLEOTIDE SEQUENCE [LARGE SCALE GENOMIC DNA]</scope>
    <source>
        <strain>ATCC 9150 / SARB42</strain>
    </source>
</reference>
<organism>
    <name type="scientific">Salmonella paratyphi A (strain ATCC 9150 / SARB42)</name>
    <dbReference type="NCBI Taxonomy" id="295319"/>
    <lineage>
        <taxon>Bacteria</taxon>
        <taxon>Pseudomonadati</taxon>
        <taxon>Pseudomonadota</taxon>
        <taxon>Gammaproteobacteria</taxon>
        <taxon>Enterobacterales</taxon>
        <taxon>Enterobacteriaceae</taxon>
        <taxon>Salmonella</taxon>
    </lineage>
</organism>
<dbReference type="EC" id="2.7.7.4" evidence="1"/>
<dbReference type="EMBL" id="CP000026">
    <property type="protein sequence ID" value="AAV78646.1"/>
    <property type="molecule type" value="Genomic_DNA"/>
</dbReference>
<dbReference type="RefSeq" id="WP_000372402.1">
    <property type="nucleotide sequence ID" value="NC_006511.1"/>
</dbReference>
<dbReference type="SMR" id="Q5PEH1"/>
<dbReference type="KEGG" id="spt:SPA2791"/>
<dbReference type="HOGENOM" id="CLU_043026_0_0_6"/>
<dbReference type="UniPathway" id="UPA00140">
    <property type="reaction ID" value="UER00204"/>
</dbReference>
<dbReference type="Proteomes" id="UP000008185">
    <property type="component" value="Chromosome"/>
</dbReference>
<dbReference type="GO" id="GO:0005524">
    <property type="term" value="F:ATP binding"/>
    <property type="evidence" value="ECO:0007669"/>
    <property type="project" value="UniProtKB-KW"/>
</dbReference>
<dbReference type="GO" id="GO:0004781">
    <property type="term" value="F:sulfate adenylyltransferase (ATP) activity"/>
    <property type="evidence" value="ECO:0007669"/>
    <property type="project" value="UniProtKB-UniRule"/>
</dbReference>
<dbReference type="GO" id="GO:0070814">
    <property type="term" value="P:hydrogen sulfide biosynthetic process"/>
    <property type="evidence" value="ECO:0007669"/>
    <property type="project" value="UniProtKB-UniRule"/>
</dbReference>
<dbReference type="GO" id="GO:0000103">
    <property type="term" value="P:sulfate assimilation"/>
    <property type="evidence" value="ECO:0007669"/>
    <property type="project" value="UniProtKB-UniRule"/>
</dbReference>
<dbReference type="CDD" id="cd23946">
    <property type="entry name" value="Sulfate_adenylyltransferase_2"/>
    <property type="match status" value="1"/>
</dbReference>
<dbReference type="FunFam" id="3.40.50.620:FF:000002">
    <property type="entry name" value="Sulfate adenylyltransferase subunit 2"/>
    <property type="match status" value="1"/>
</dbReference>
<dbReference type="Gene3D" id="3.40.50.620">
    <property type="entry name" value="HUPs"/>
    <property type="match status" value="1"/>
</dbReference>
<dbReference type="HAMAP" id="MF_00064">
    <property type="entry name" value="Sulf_adenylyltr_sub2"/>
    <property type="match status" value="1"/>
</dbReference>
<dbReference type="InterPro" id="IPR002500">
    <property type="entry name" value="PAPS_reduct_dom"/>
</dbReference>
<dbReference type="InterPro" id="IPR014729">
    <property type="entry name" value="Rossmann-like_a/b/a_fold"/>
</dbReference>
<dbReference type="InterPro" id="IPR011784">
    <property type="entry name" value="SO4_adenylTrfase_ssu"/>
</dbReference>
<dbReference type="InterPro" id="IPR050128">
    <property type="entry name" value="Sulfate_adenylyltrnsfr_sub2"/>
</dbReference>
<dbReference type="NCBIfam" id="TIGR02039">
    <property type="entry name" value="CysD"/>
    <property type="match status" value="1"/>
</dbReference>
<dbReference type="NCBIfam" id="NF003587">
    <property type="entry name" value="PRK05253.1"/>
    <property type="match status" value="1"/>
</dbReference>
<dbReference type="NCBIfam" id="NF009214">
    <property type="entry name" value="PRK12563.1"/>
    <property type="match status" value="1"/>
</dbReference>
<dbReference type="PANTHER" id="PTHR43196">
    <property type="entry name" value="SULFATE ADENYLYLTRANSFERASE SUBUNIT 2"/>
    <property type="match status" value="1"/>
</dbReference>
<dbReference type="PANTHER" id="PTHR43196:SF1">
    <property type="entry name" value="SULFATE ADENYLYLTRANSFERASE SUBUNIT 2"/>
    <property type="match status" value="1"/>
</dbReference>
<dbReference type="Pfam" id="PF01507">
    <property type="entry name" value="PAPS_reduct"/>
    <property type="match status" value="1"/>
</dbReference>
<dbReference type="PIRSF" id="PIRSF002936">
    <property type="entry name" value="CysDAde_trans"/>
    <property type="match status" value="1"/>
</dbReference>
<dbReference type="SUPFAM" id="SSF52402">
    <property type="entry name" value="Adenine nucleotide alpha hydrolases-like"/>
    <property type="match status" value="1"/>
</dbReference>
<evidence type="ECO:0000255" key="1">
    <source>
        <dbReference type="HAMAP-Rule" id="MF_00064"/>
    </source>
</evidence>
<feature type="chain" id="PRO_1000008980" description="Sulfate adenylyltransferase subunit 2">
    <location>
        <begin position="1"/>
        <end position="302"/>
    </location>
</feature>
<gene>
    <name evidence="1" type="primary">cysD</name>
    <name type="ordered locus">SPA2791</name>
</gene>